<proteinExistence type="evidence at transcript level"/>
<dbReference type="EC" id="2.7.4.6"/>
<dbReference type="EMBL" id="AY231961">
    <property type="protein sequence ID" value="AAR09984.1"/>
    <property type="molecule type" value="mRNA"/>
</dbReference>
<dbReference type="SMR" id="Q6XI71"/>
<dbReference type="EnsemblMetazoa" id="FBtr0269823">
    <property type="protein sequence ID" value="FBpp0268315"/>
    <property type="gene ID" value="FBgn0067997"/>
</dbReference>
<dbReference type="EnsemblMetazoa" id="XM_002099506.3">
    <property type="protein sequence ID" value="XP_002099542.1"/>
    <property type="gene ID" value="LOC6539040"/>
</dbReference>
<dbReference type="eggNOG" id="KOG0888">
    <property type="taxonomic scope" value="Eukaryota"/>
</dbReference>
<dbReference type="OrthoDB" id="2162449at2759"/>
<dbReference type="ChiTaRS" id="awd">
    <property type="organism name" value="fly"/>
</dbReference>
<dbReference type="GO" id="GO:0005880">
    <property type="term" value="C:nuclear microtubule"/>
    <property type="evidence" value="ECO:0000250"/>
    <property type="project" value="UniProtKB"/>
</dbReference>
<dbReference type="GO" id="GO:0005524">
    <property type="term" value="F:ATP binding"/>
    <property type="evidence" value="ECO:0000250"/>
    <property type="project" value="UniProtKB"/>
</dbReference>
<dbReference type="GO" id="GO:0016301">
    <property type="term" value="F:kinase activity"/>
    <property type="evidence" value="ECO:0000250"/>
    <property type="project" value="UniProtKB"/>
</dbReference>
<dbReference type="GO" id="GO:0000287">
    <property type="term" value="F:magnesium ion binding"/>
    <property type="evidence" value="ECO:0000250"/>
    <property type="project" value="UniProtKB"/>
</dbReference>
<dbReference type="GO" id="GO:0004550">
    <property type="term" value="F:nucleoside diphosphate kinase activity"/>
    <property type="evidence" value="ECO:0000250"/>
    <property type="project" value="UniProtKB"/>
</dbReference>
<dbReference type="GO" id="GO:0006241">
    <property type="term" value="P:CTP biosynthetic process"/>
    <property type="evidence" value="ECO:0007669"/>
    <property type="project" value="InterPro"/>
</dbReference>
<dbReference type="GO" id="GO:0006183">
    <property type="term" value="P:GTP biosynthetic process"/>
    <property type="evidence" value="ECO:0007669"/>
    <property type="project" value="InterPro"/>
</dbReference>
<dbReference type="GO" id="GO:0006228">
    <property type="term" value="P:UTP biosynthetic process"/>
    <property type="evidence" value="ECO:0007669"/>
    <property type="project" value="InterPro"/>
</dbReference>
<dbReference type="CDD" id="cd04413">
    <property type="entry name" value="NDPk_I"/>
    <property type="match status" value="1"/>
</dbReference>
<dbReference type="FunFam" id="3.30.70.141:FF:000002">
    <property type="entry name" value="Nucleoside diphosphate kinase"/>
    <property type="match status" value="1"/>
</dbReference>
<dbReference type="Gene3D" id="3.30.70.141">
    <property type="entry name" value="Nucleoside diphosphate kinase-like domain"/>
    <property type="match status" value="1"/>
</dbReference>
<dbReference type="HAMAP" id="MF_00451">
    <property type="entry name" value="NDP_kinase"/>
    <property type="match status" value="1"/>
</dbReference>
<dbReference type="InterPro" id="IPR034907">
    <property type="entry name" value="NDK-like_dom"/>
</dbReference>
<dbReference type="InterPro" id="IPR036850">
    <property type="entry name" value="NDK-like_dom_sf"/>
</dbReference>
<dbReference type="InterPro" id="IPR001564">
    <property type="entry name" value="Nucleoside_diP_kinase"/>
</dbReference>
<dbReference type="InterPro" id="IPR023005">
    <property type="entry name" value="Nucleoside_diP_kinase_AS"/>
</dbReference>
<dbReference type="NCBIfam" id="NF001908">
    <property type="entry name" value="PRK00668.1"/>
    <property type="match status" value="1"/>
</dbReference>
<dbReference type="PANTHER" id="PTHR11349">
    <property type="entry name" value="NUCLEOSIDE DIPHOSPHATE KINASE"/>
    <property type="match status" value="1"/>
</dbReference>
<dbReference type="Pfam" id="PF00334">
    <property type="entry name" value="NDK"/>
    <property type="match status" value="1"/>
</dbReference>
<dbReference type="PRINTS" id="PR01243">
    <property type="entry name" value="NUCDPKINASE"/>
</dbReference>
<dbReference type="SMART" id="SM00562">
    <property type="entry name" value="NDK"/>
    <property type="match status" value="1"/>
</dbReference>
<dbReference type="SUPFAM" id="SSF54919">
    <property type="entry name" value="Nucleoside diphosphate kinase, NDK"/>
    <property type="match status" value="1"/>
</dbReference>
<dbReference type="PROSITE" id="PS00469">
    <property type="entry name" value="NDPK"/>
    <property type="match status" value="1"/>
</dbReference>
<dbReference type="PROSITE" id="PS51374">
    <property type="entry name" value="NDPK_LIKE"/>
    <property type="match status" value="1"/>
</dbReference>
<comment type="function">
    <text evidence="2">Major role in the synthesis of nucleoside triphosphates other than ATP. The ATP gamma phosphate is transferred to the NDP beta phosphate via a ping-pong mechanism, using a phosphorylated active-site intermediate (By similarity).</text>
</comment>
<comment type="catalytic activity">
    <reaction evidence="2">
        <text>a 2'-deoxyribonucleoside 5'-diphosphate + ATP = a 2'-deoxyribonucleoside 5'-triphosphate + ADP</text>
        <dbReference type="Rhea" id="RHEA:44640"/>
        <dbReference type="ChEBI" id="CHEBI:30616"/>
        <dbReference type="ChEBI" id="CHEBI:61560"/>
        <dbReference type="ChEBI" id="CHEBI:73316"/>
        <dbReference type="ChEBI" id="CHEBI:456216"/>
        <dbReference type="EC" id="2.7.4.6"/>
    </reaction>
</comment>
<comment type="catalytic activity">
    <reaction evidence="2">
        <text>a ribonucleoside 5'-diphosphate + ATP = a ribonucleoside 5'-triphosphate + ADP</text>
        <dbReference type="Rhea" id="RHEA:18113"/>
        <dbReference type="ChEBI" id="CHEBI:30616"/>
        <dbReference type="ChEBI" id="CHEBI:57930"/>
        <dbReference type="ChEBI" id="CHEBI:61557"/>
        <dbReference type="ChEBI" id="CHEBI:456216"/>
        <dbReference type="EC" id="2.7.4.6"/>
    </reaction>
</comment>
<comment type="cofactor">
    <cofactor evidence="1">
        <name>Mg(2+)</name>
        <dbReference type="ChEBI" id="CHEBI:18420"/>
    </cofactor>
</comment>
<comment type="subunit">
    <text evidence="2">Homohexamer.</text>
</comment>
<comment type="similarity">
    <text evidence="3">Belongs to the NDK family.</text>
</comment>
<organism>
    <name type="scientific">Drosophila yakuba</name>
    <name type="common">Fruit fly</name>
    <dbReference type="NCBI Taxonomy" id="7245"/>
    <lineage>
        <taxon>Eukaryota</taxon>
        <taxon>Metazoa</taxon>
        <taxon>Ecdysozoa</taxon>
        <taxon>Arthropoda</taxon>
        <taxon>Hexapoda</taxon>
        <taxon>Insecta</taxon>
        <taxon>Pterygota</taxon>
        <taxon>Neoptera</taxon>
        <taxon>Endopterygota</taxon>
        <taxon>Diptera</taxon>
        <taxon>Brachycera</taxon>
        <taxon>Muscomorpha</taxon>
        <taxon>Ephydroidea</taxon>
        <taxon>Drosophilidae</taxon>
        <taxon>Drosophila</taxon>
        <taxon>Sophophora</taxon>
    </lineage>
</organism>
<keyword id="KW-0067">ATP-binding</keyword>
<keyword id="KW-0418">Kinase</keyword>
<keyword id="KW-0460">Magnesium</keyword>
<keyword id="KW-0479">Metal-binding</keyword>
<keyword id="KW-0546">Nucleotide metabolism</keyword>
<keyword id="KW-0547">Nucleotide-binding</keyword>
<keyword id="KW-0597">Phosphoprotein</keyword>
<keyword id="KW-0808">Transferase</keyword>
<feature type="chain" id="PRO_0000137109" description="Nucleoside diphosphate kinase">
    <location>
        <begin position="1" status="less than"/>
        <end position="150"/>
    </location>
</feature>
<feature type="active site" description="Pros-phosphohistidine intermediate" evidence="2">
    <location>
        <position position="116"/>
    </location>
</feature>
<feature type="binding site" evidence="1">
    <location>
        <position position="10"/>
    </location>
    <ligand>
        <name>ATP</name>
        <dbReference type="ChEBI" id="CHEBI:30616"/>
    </ligand>
</feature>
<feature type="binding site" evidence="1">
    <location>
        <position position="58"/>
    </location>
    <ligand>
        <name>ATP</name>
        <dbReference type="ChEBI" id="CHEBI:30616"/>
    </ligand>
</feature>
<feature type="binding site" evidence="1">
    <location>
        <position position="86"/>
    </location>
    <ligand>
        <name>ATP</name>
        <dbReference type="ChEBI" id="CHEBI:30616"/>
    </ligand>
</feature>
<feature type="binding site" evidence="1">
    <location>
        <position position="92"/>
    </location>
    <ligand>
        <name>ATP</name>
        <dbReference type="ChEBI" id="CHEBI:30616"/>
    </ligand>
</feature>
<feature type="binding site" evidence="1">
    <location>
        <position position="103"/>
    </location>
    <ligand>
        <name>ATP</name>
        <dbReference type="ChEBI" id="CHEBI:30616"/>
    </ligand>
</feature>
<feature type="binding site" evidence="1">
    <location>
        <position position="113"/>
    </location>
    <ligand>
        <name>ATP</name>
        <dbReference type="ChEBI" id="CHEBI:30616"/>
    </ligand>
</feature>
<feature type="non-terminal residue" evidence="5">
    <location>
        <position position="1"/>
    </location>
</feature>
<gene>
    <name type="primary">awd</name>
</gene>
<accession>Q6XI71</accession>
<sequence>NKERTFIMVKPDGVQRGLVGKIIERFEQKGFKLVALKFTWASKELLEKHYADLSARPFFPGLVNYMNSGPVVPMVWEGLNVVKTGRQMLGATNPADSLPGTIRGDFCIQVGRNIIHGSDAVESAEKEIALWFNEKELVTWTPAAKDWIYE</sequence>
<protein>
    <recommendedName>
        <fullName>Nucleoside diphosphate kinase</fullName>
        <shortName>NDK</shortName>
        <shortName>NDP kinase</shortName>
        <ecNumber>2.7.4.6</ecNumber>
    </recommendedName>
    <alternativeName>
        <fullName>Abnormal wing disks protein</fullName>
    </alternativeName>
</protein>
<evidence type="ECO:0000250" key="1"/>
<evidence type="ECO:0000250" key="2">
    <source>
        <dbReference type="UniProtKB" id="P08879"/>
    </source>
</evidence>
<evidence type="ECO:0000255" key="3"/>
<evidence type="ECO:0000269" key="4">
    <source>
    </source>
</evidence>
<evidence type="ECO:0000312" key="5">
    <source>
        <dbReference type="EMBL" id="AAR09984.1"/>
    </source>
</evidence>
<reference evidence="5" key="1">
    <citation type="journal article" date="2003" name="Genome Res.">
        <title>An evolutionary analysis of orphan genes in Drosophila.</title>
        <authorList>
            <person name="Domazet-Loso T."/>
            <person name="Tautz D."/>
        </authorList>
    </citation>
    <scope>NUCLEOTIDE SEQUENCE [MRNA]</scope>
    <source>
        <tissue evidence="4">Embryo</tissue>
    </source>
</reference>
<name>NDKA_DROYA</name>